<reference key="1">
    <citation type="submission" date="2005-08" db="EMBL/GenBank/DDBJ databases">
        <title>Complete sequence of Pelodictyon luteolum DSM 273.</title>
        <authorList>
            <consortium name="US DOE Joint Genome Institute"/>
            <person name="Copeland A."/>
            <person name="Lucas S."/>
            <person name="Lapidus A."/>
            <person name="Barry K."/>
            <person name="Detter J.C."/>
            <person name="Glavina T."/>
            <person name="Hammon N."/>
            <person name="Israni S."/>
            <person name="Pitluck S."/>
            <person name="Bryant D."/>
            <person name="Schmutz J."/>
            <person name="Larimer F."/>
            <person name="Land M."/>
            <person name="Kyrpides N."/>
            <person name="Ivanova N."/>
            <person name="Richardson P."/>
        </authorList>
    </citation>
    <scope>NUCLEOTIDE SEQUENCE [LARGE SCALE GENOMIC DNA]</scope>
    <source>
        <strain>DSM 273 / BCRC 81028 / 2530</strain>
    </source>
</reference>
<evidence type="ECO:0000255" key="1">
    <source>
        <dbReference type="HAMAP-Rule" id="MF_00012"/>
    </source>
</evidence>
<comment type="function">
    <text evidence="1">Functions in the biosynthesis of branched-chain amino acids. Catalyzes the dehydration of (2R,3R)-2,3-dihydroxy-3-methylpentanoate (2,3-dihydroxy-3-methylvalerate) into 2-oxo-3-methylpentanoate (2-oxo-3-methylvalerate) and of (2R)-2,3-dihydroxy-3-methylbutanoate (2,3-dihydroxyisovalerate) into 2-oxo-3-methylbutanoate (2-oxoisovalerate), the penultimate precursor to L-isoleucine and L-valine, respectively.</text>
</comment>
<comment type="catalytic activity">
    <reaction evidence="1">
        <text>(2R)-2,3-dihydroxy-3-methylbutanoate = 3-methyl-2-oxobutanoate + H2O</text>
        <dbReference type="Rhea" id="RHEA:24809"/>
        <dbReference type="ChEBI" id="CHEBI:11851"/>
        <dbReference type="ChEBI" id="CHEBI:15377"/>
        <dbReference type="ChEBI" id="CHEBI:49072"/>
        <dbReference type="EC" id="4.2.1.9"/>
    </reaction>
    <physiologicalReaction direction="left-to-right" evidence="1">
        <dbReference type="Rhea" id="RHEA:24810"/>
    </physiologicalReaction>
</comment>
<comment type="catalytic activity">
    <reaction evidence="1">
        <text>(2R,3R)-2,3-dihydroxy-3-methylpentanoate = (S)-3-methyl-2-oxopentanoate + H2O</text>
        <dbReference type="Rhea" id="RHEA:27694"/>
        <dbReference type="ChEBI" id="CHEBI:15377"/>
        <dbReference type="ChEBI" id="CHEBI:35146"/>
        <dbReference type="ChEBI" id="CHEBI:49258"/>
        <dbReference type="EC" id="4.2.1.9"/>
    </reaction>
    <physiologicalReaction direction="left-to-right" evidence="1">
        <dbReference type="Rhea" id="RHEA:27695"/>
    </physiologicalReaction>
</comment>
<comment type="cofactor">
    <cofactor evidence="1">
        <name>[2Fe-2S] cluster</name>
        <dbReference type="ChEBI" id="CHEBI:190135"/>
    </cofactor>
    <text evidence="1">Binds 1 [2Fe-2S] cluster per subunit. This cluster acts as a Lewis acid cofactor.</text>
</comment>
<comment type="cofactor">
    <cofactor evidence="1">
        <name>Mg(2+)</name>
        <dbReference type="ChEBI" id="CHEBI:18420"/>
    </cofactor>
</comment>
<comment type="pathway">
    <text evidence="1">Amino-acid biosynthesis; L-isoleucine biosynthesis; L-isoleucine from 2-oxobutanoate: step 3/4.</text>
</comment>
<comment type="pathway">
    <text evidence="1">Amino-acid biosynthesis; L-valine biosynthesis; L-valine from pyruvate: step 3/4.</text>
</comment>
<comment type="subunit">
    <text evidence="1">Homodimer.</text>
</comment>
<comment type="similarity">
    <text evidence="1">Belongs to the IlvD/Edd family.</text>
</comment>
<proteinExistence type="inferred from homology"/>
<protein>
    <recommendedName>
        <fullName evidence="1">Dihydroxy-acid dehydratase</fullName>
        <shortName evidence="1">DAD</shortName>
        <ecNumber evidence="1">4.2.1.9</ecNumber>
    </recommendedName>
</protein>
<feature type="chain" id="PRO_1000001025" description="Dihydroxy-acid dehydratase">
    <location>
        <begin position="1"/>
        <end position="565"/>
    </location>
</feature>
<feature type="active site" description="Proton acceptor" evidence="1">
    <location>
        <position position="473"/>
    </location>
</feature>
<feature type="binding site" evidence="1">
    <location>
        <position position="80"/>
    </location>
    <ligand>
        <name>Mg(2+)</name>
        <dbReference type="ChEBI" id="CHEBI:18420"/>
    </ligand>
</feature>
<feature type="binding site" evidence="1">
    <location>
        <position position="121"/>
    </location>
    <ligand>
        <name>[2Fe-2S] cluster</name>
        <dbReference type="ChEBI" id="CHEBI:190135"/>
    </ligand>
</feature>
<feature type="binding site" evidence="1">
    <location>
        <position position="122"/>
    </location>
    <ligand>
        <name>Mg(2+)</name>
        <dbReference type="ChEBI" id="CHEBI:18420"/>
    </ligand>
</feature>
<feature type="binding site" description="via carbamate group" evidence="1">
    <location>
        <position position="123"/>
    </location>
    <ligand>
        <name>Mg(2+)</name>
        <dbReference type="ChEBI" id="CHEBI:18420"/>
    </ligand>
</feature>
<feature type="binding site" evidence="1">
    <location>
        <position position="194"/>
    </location>
    <ligand>
        <name>[2Fe-2S] cluster</name>
        <dbReference type="ChEBI" id="CHEBI:190135"/>
    </ligand>
</feature>
<feature type="binding site" evidence="1">
    <location>
        <position position="447"/>
    </location>
    <ligand>
        <name>Mg(2+)</name>
        <dbReference type="ChEBI" id="CHEBI:18420"/>
    </ligand>
</feature>
<feature type="modified residue" description="N6-carboxylysine" evidence="1">
    <location>
        <position position="123"/>
    </location>
</feature>
<sequence>MRSDTIKTGFEKAPHRSLLKATGTIHGKSDYQKPFIGICNSFNELIPGHAHLQELGRIAKEEVRKAGGVPFEFNTIGVCDGIAMGHIGMRYSLASRELIADSVETVAEAHRLDGLVCIPNCDKITPGMMMAALRINIPVIFVSGGPMKAGHTPSGKTVDLISVFEAVGQRSTGEISEEELETIEENACPGCGSCSGMFTANSMNCLSEALGFALPGNGTILAGDPRRNELVREASRRIIDLVEKNVRPRDILSRSALLNAFALDFAMGGSTNTILHTLAIANEAELDFDFSELNGLSAKTPYICKVSPATMDVHIEDVDRAGGISAILHELSKIDGLLDLSVPTVTGKSLGENIKNAEVLNRKVIRSIEDPYSATGGLCVLYGNLAPQGAVIKTGAVSAPMMHHSGPAKVYDSQDDAIAGIMGGDVHSGDVVVIRYEGPKGGPGMPEMLSPTSAIMGRGLGDSVALITDGRFSGGSRGACIGHVSPEAAVKGPIAALRNGDTVTIDIPGRSITMEVSDEEIADRIAGLPAFVPKIRKGYLARYAEMVTSANTGAILKTPVSCEPK</sequence>
<gene>
    <name evidence="1" type="primary">ilvD</name>
    <name type="ordered locus">Plut_0609</name>
</gene>
<keyword id="KW-0001">2Fe-2S</keyword>
<keyword id="KW-0028">Amino-acid biosynthesis</keyword>
<keyword id="KW-0100">Branched-chain amino acid biosynthesis</keyword>
<keyword id="KW-0408">Iron</keyword>
<keyword id="KW-0411">Iron-sulfur</keyword>
<keyword id="KW-0456">Lyase</keyword>
<keyword id="KW-0460">Magnesium</keyword>
<keyword id="KW-0479">Metal-binding</keyword>
<keyword id="KW-1185">Reference proteome</keyword>
<name>ILVD_CHLL3</name>
<accession>Q3B589</accession>
<organism>
    <name type="scientific">Chlorobium luteolum (strain DSM 273 / BCRC 81028 / 2530)</name>
    <name type="common">Pelodictyon luteolum</name>
    <dbReference type="NCBI Taxonomy" id="319225"/>
    <lineage>
        <taxon>Bacteria</taxon>
        <taxon>Pseudomonadati</taxon>
        <taxon>Chlorobiota</taxon>
        <taxon>Chlorobiia</taxon>
        <taxon>Chlorobiales</taxon>
        <taxon>Chlorobiaceae</taxon>
        <taxon>Chlorobium/Pelodictyon group</taxon>
        <taxon>Pelodictyon</taxon>
    </lineage>
</organism>
<dbReference type="EC" id="4.2.1.9" evidence="1"/>
<dbReference type="EMBL" id="CP000096">
    <property type="protein sequence ID" value="ABB23492.1"/>
    <property type="molecule type" value="Genomic_DNA"/>
</dbReference>
<dbReference type="RefSeq" id="WP_011357367.1">
    <property type="nucleotide sequence ID" value="NC_007512.1"/>
</dbReference>
<dbReference type="SMR" id="Q3B589"/>
<dbReference type="STRING" id="319225.Plut_0609"/>
<dbReference type="KEGG" id="plt:Plut_0609"/>
<dbReference type="eggNOG" id="COG0129">
    <property type="taxonomic scope" value="Bacteria"/>
</dbReference>
<dbReference type="HOGENOM" id="CLU_014271_4_2_10"/>
<dbReference type="OrthoDB" id="9807077at2"/>
<dbReference type="UniPathway" id="UPA00047">
    <property type="reaction ID" value="UER00057"/>
</dbReference>
<dbReference type="UniPathway" id="UPA00049">
    <property type="reaction ID" value="UER00061"/>
</dbReference>
<dbReference type="Proteomes" id="UP000002709">
    <property type="component" value="Chromosome"/>
</dbReference>
<dbReference type="GO" id="GO:0005829">
    <property type="term" value="C:cytosol"/>
    <property type="evidence" value="ECO:0007669"/>
    <property type="project" value="TreeGrafter"/>
</dbReference>
<dbReference type="GO" id="GO:0051537">
    <property type="term" value="F:2 iron, 2 sulfur cluster binding"/>
    <property type="evidence" value="ECO:0007669"/>
    <property type="project" value="UniProtKB-UniRule"/>
</dbReference>
<dbReference type="GO" id="GO:0004160">
    <property type="term" value="F:dihydroxy-acid dehydratase activity"/>
    <property type="evidence" value="ECO:0007669"/>
    <property type="project" value="UniProtKB-UniRule"/>
</dbReference>
<dbReference type="GO" id="GO:0000287">
    <property type="term" value="F:magnesium ion binding"/>
    <property type="evidence" value="ECO:0007669"/>
    <property type="project" value="UniProtKB-UniRule"/>
</dbReference>
<dbReference type="GO" id="GO:0009097">
    <property type="term" value="P:isoleucine biosynthetic process"/>
    <property type="evidence" value="ECO:0007669"/>
    <property type="project" value="UniProtKB-UniRule"/>
</dbReference>
<dbReference type="GO" id="GO:0009099">
    <property type="term" value="P:L-valine biosynthetic process"/>
    <property type="evidence" value="ECO:0007669"/>
    <property type="project" value="UniProtKB-UniRule"/>
</dbReference>
<dbReference type="FunFam" id="3.50.30.80:FF:000001">
    <property type="entry name" value="Dihydroxy-acid dehydratase"/>
    <property type="match status" value="1"/>
</dbReference>
<dbReference type="Gene3D" id="3.50.30.80">
    <property type="entry name" value="IlvD/EDD C-terminal domain-like"/>
    <property type="match status" value="1"/>
</dbReference>
<dbReference type="HAMAP" id="MF_00012">
    <property type="entry name" value="IlvD"/>
    <property type="match status" value="1"/>
</dbReference>
<dbReference type="InterPro" id="IPR042096">
    <property type="entry name" value="Dihydro-acid_dehy_C"/>
</dbReference>
<dbReference type="InterPro" id="IPR004404">
    <property type="entry name" value="DihydroxyA_deHydtase"/>
</dbReference>
<dbReference type="InterPro" id="IPR020558">
    <property type="entry name" value="DiOHA_6PGluconate_deHydtase_CS"/>
</dbReference>
<dbReference type="InterPro" id="IPR056740">
    <property type="entry name" value="ILV_EDD_C"/>
</dbReference>
<dbReference type="InterPro" id="IPR000581">
    <property type="entry name" value="ILV_EDD_N"/>
</dbReference>
<dbReference type="InterPro" id="IPR037237">
    <property type="entry name" value="IlvD/EDD_N"/>
</dbReference>
<dbReference type="NCBIfam" id="TIGR00110">
    <property type="entry name" value="ilvD"/>
    <property type="match status" value="1"/>
</dbReference>
<dbReference type="NCBIfam" id="NF002068">
    <property type="entry name" value="PRK00911.1"/>
    <property type="match status" value="1"/>
</dbReference>
<dbReference type="PANTHER" id="PTHR43661">
    <property type="entry name" value="D-XYLONATE DEHYDRATASE"/>
    <property type="match status" value="1"/>
</dbReference>
<dbReference type="PANTHER" id="PTHR43661:SF3">
    <property type="entry name" value="D-XYLONATE DEHYDRATASE YAGF-RELATED"/>
    <property type="match status" value="1"/>
</dbReference>
<dbReference type="Pfam" id="PF24877">
    <property type="entry name" value="ILV_EDD_C"/>
    <property type="match status" value="1"/>
</dbReference>
<dbReference type="Pfam" id="PF00920">
    <property type="entry name" value="ILVD_EDD_N"/>
    <property type="match status" value="1"/>
</dbReference>
<dbReference type="SUPFAM" id="SSF143975">
    <property type="entry name" value="IlvD/EDD N-terminal domain-like"/>
    <property type="match status" value="1"/>
</dbReference>
<dbReference type="SUPFAM" id="SSF52016">
    <property type="entry name" value="LeuD/IlvD-like"/>
    <property type="match status" value="1"/>
</dbReference>
<dbReference type="PROSITE" id="PS00886">
    <property type="entry name" value="ILVD_EDD_1"/>
    <property type="match status" value="1"/>
</dbReference>
<dbReference type="PROSITE" id="PS00887">
    <property type="entry name" value="ILVD_EDD_2"/>
    <property type="match status" value="1"/>
</dbReference>